<accession>Q85X09</accession>
<proteinExistence type="inferred from homology"/>
<comment type="function">
    <text evidence="1">Found at the monomer-monomer interface of the photosystem II (PS II) dimer, plays a role in assembly and dimerization of PSII. PSII is a light-driven water plastoquinone oxidoreductase, using light energy to abstract electrons from H(2)O, generating a proton gradient subsequently used for ATP formation.</text>
</comment>
<comment type="subunit">
    <text evidence="1">PSII is composed of 1 copy each of membrane proteins PsbA, PsbB, PsbC, PsbD, PsbE, PsbF, PsbH, PsbI, PsbJ, PsbK, PsbL, PsbM, PsbT, PsbY, PsbZ, Psb30/Ycf12, at least 3 peripheral proteins of the oxygen-evolving complex and a large number of cofactors. It forms dimeric complexes.</text>
</comment>
<comment type="subcellular location">
    <subcellularLocation>
        <location evidence="1">Plastid</location>
        <location evidence="1">Chloroplast thylakoid membrane</location>
        <topology evidence="1">Single-pass membrane protein</topology>
    </subcellularLocation>
</comment>
<comment type="similarity">
    <text evidence="1">Belongs to the PsbT family.</text>
</comment>
<dbReference type="EMBL" id="AY228468">
    <property type="protein sequence ID" value="AAO74057.1"/>
    <property type="molecule type" value="Genomic_DNA"/>
</dbReference>
<dbReference type="RefSeq" id="NP_817209.1">
    <property type="nucleotide sequence ID" value="NC_004677.2"/>
</dbReference>
<dbReference type="SMR" id="Q85X09"/>
<dbReference type="GeneID" id="806926"/>
<dbReference type="GO" id="GO:0009535">
    <property type="term" value="C:chloroplast thylakoid membrane"/>
    <property type="evidence" value="ECO:0007669"/>
    <property type="project" value="UniProtKB-SubCell"/>
</dbReference>
<dbReference type="GO" id="GO:0009539">
    <property type="term" value="C:photosystem II reaction center"/>
    <property type="evidence" value="ECO:0007669"/>
    <property type="project" value="InterPro"/>
</dbReference>
<dbReference type="GO" id="GO:0015979">
    <property type="term" value="P:photosynthesis"/>
    <property type="evidence" value="ECO:0007669"/>
    <property type="project" value="UniProtKB-UniRule"/>
</dbReference>
<dbReference type="HAMAP" id="MF_00808">
    <property type="entry name" value="PSII_PsbT"/>
    <property type="match status" value="1"/>
</dbReference>
<dbReference type="InterPro" id="IPR001743">
    <property type="entry name" value="PSII_PsbT"/>
</dbReference>
<dbReference type="InterPro" id="IPR037268">
    <property type="entry name" value="PSII_PsbT_sf"/>
</dbReference>
<dbReference type="PANTHER" id="PTHR36411">
    <property type="match status" value="1"/>
</dbReference>
<dbReference type="PANTHER" id="PTHR36411:SF2">
    <property type="entry name" value="PHOTOSYSTEM II REACTION CENTER PROTEIN T"/>
    <property type="match status" value="1"/>
</dbReference>
<dbReference type="Pfam" id="PF01405">
    <property type="entry name" value="PsbT"/>
    <property type="match status" value="1"/>
</dbReference>
<dbReference type="SUPFAM" id="SSF161029">
    <property type="entry name" value="Photosystem II reaction center protein T, PsbT"/>
    <property type="match status" value="1"/>
</dbReference>
<name>PSBT_PINKO</name>
<feature type="chain" id="PRO_0000217968" description="Photosystem II reaction center protein T">
    <location>
        <begin position="1"/>
        <end position="35"/>
    </location>
</feature>
<feature type="transmembrane region" description="Helical" evidence="1">
    <location>
        <begin position="3"/>
        <end position="23"/>
    </location>
</feature>
<geneLocation type="chloroplast"/>
<sequence>MEALVYTFLLVSTLGIIFFAIFFREPPKVPTKGGK</sequence>
<keyword id="KW-0150">Chloroplast</keyword>
<keyword id="KW-0472">Membrane</keyword>
<keyword id="KW-0602">Photosynthesis</keyword>
<keyword id="KW-0604">Photosystem II</keyword>
<keyword id="KW-0934">Plastid</keyword>
<keyword id="KW-0793">Thylakoid</keyword>
<keyword id="KW-0812">Transmembrane</keyword>
<keyword id="KW-1133">Transmembrane helix</keyword>
<protein>
    <recommendedName>
        <fullName evidence="1">Photosystem II reaction center protein T</fullName>
        <shortName evidence="1">PSII-T</shortName>
    </recommendedName>
</protein>
<gene>
    <name evidence="1" type="primary">psbT</name>
</gene>
<evidence type="ECO:0000255" key="1">
    <source>
        <dbReference type="HAMAP-Rule" id="MF_00808"/>
    </source>
</evidence>
<reference key="1">
    <citation type="submission" date="2003-02" db="EMBL/GenBank/DDBJ databases">
        <title>Complete nucleotide sequence of Pinus koraiensis.</title>
        <authorList>
            <person name="Noh E.W."/>
            <person name="Lee J.S."/>
            <person name="Choi Y.I."/>
            <person name="Han M.S."/>
            <person name="Yi Y.S."/>
            <person name="Han S.U."/>
        </authorList>
    </citation>
    <scope>NUCLEOTIDE SEQUENCE [LARGE SCALE GENOMIC DNA]</scope>
    <source>
        <strain>KangWon16</strain>
    </source>
</reference>
<organism>
    <name type="scientific">Pinus koraiensis</name>
    <name type="common">Korean pine</name>
    <dbReference type="NCBI Taxonomy" id="88728"/>
    <lineage>
        <taxon>Eukaryota</taxon>
        <taxon>Viridiplantae</taxon>
        <taxon>Streptophyta</taxon>
        <taxon>Embryophyta</taxon>
        <taxon>Tracheophyta</taxon>
        <taxon>Spermatophyta</taxon>
        <taxon>Pinopsida</taxon>
        <taxon>Pinidae</taxon>
        <taxon>Conifers I</taxon>
        <taxon>Pinales</taxon>
        <taxon>Pinaceae</taxon>
        <taxon>Pinus</taxon>
        <taxon>Pinus subgen. Strobus</taxon>
    </lineage>
</organism>